<keyword id="KW-0963">Cytoplasm</keyword>
<keyword id="KW-0255">Endonuclease</keyword>
<keyword id="KW-0378">Hydrolase</keyword>
<keyword id="KW-0460">Magnesium</keyword>
<keyword id="KW-0479">Metal-binding</keyword>
<keyword id="KW-0540">Nuclease</keyword>
<proteinExistence type="inferred from homology"/>
<organism>
    <name type="scientific">Helicobacter pylori (strain HPAG1)</name>
    <dbReference type="NCBI Taxonomy" id="357544"/>
    <lineage>
        <taxon>Bacteria</taxon>
        <taxon>Pseudomonadati</taxon>
        <taxon>Campylobacterota</taxon>
        <taxon>Epsilonproteobacteria</taxon>
        <taxon>Campylobacterales</taxon>
        <taxon>Helicobacteraceae</taxon>
        <taxon>Helicobacter</taxon>
    </lineage>
</organism>
<name>RNH_HELPH</name>
<accession>Q1CTK9</accession>
<gene>
    <name evidence="1" type="primary">rnhA</name>
    <name type="ordered locus">HPAG1_0646</name>
</gene>
<reference key="1">
    <citation type="journal article" date="2006" name="Proc. Natl. Acad. Sci. U.S.A.">
        <title>The complete genome sequence of a chronic atrophic gastritis Helicobacter pylori strain: evolution during disease progression.</title>
        <authorList>
            <person name="Oh J.D."/>
            <person name="Kling-Baeckhed H."/>
            <person name="Giannakis M."/>
            <person name="Xu J."/>
            <person name="Fulton R.S."/>
            <person name="Fulton L.A."/>
            <person name="Cordum H.S."/>
            <person name="Wang C."/>
            <person name="Elliott G."/>
            <person name="Edwards J."/>
            <person name="Mardis E.R."/>
            <person name="Engstrand L.G."/>
            <person name="Gordon J.I."/>
        </authorList>
    </citation>
    <scope>NUCLEOTIDE SEQUENCE [LARGE SCALE GENOMIC DNA]</scope>
    <source>
        <strain>HPAG1</strain>
    </source>
</reference>
<protein>
    <recommendedName>
        <fullName evidence="1">Ribonuclease H</fullName>
        <shortName evidence="1">RNase H</shortName>
        <ecNumber evidence="1">3.1.26.4</ecNumber>
    </recommendedName>
</protein>
<evidence type="ECO:0000255" key="1">
    <source>
        <dbReference type="HAMAP-Rule" id="MF_00042"/>
    </source>
</evidence>
<evidence type="ECO:0000255" key="2">
    <source>
        <dbReference type="PROSITE-ProRule" id="PRU00408"/>
    </source>
</evidence>
<dbReference type="EC" id="3.1.26.4" evidence="1"/>
<dbReference type="EMBL" id="CP000241">
    <property type="protein sequence ID" value="ABF84713.1"/>
    <property type="molecule type" value="Genomic_DNA"/>
</dbReference>
<dbReference type="RefSeq" id="WP_001155449.1">
    <property type="nucleotide sequence ID" value="NC_008086.1"/>
</dbReference>
<dbReference type="SMR" id="Q1CTK9"/>
<dbReference type="KEGG" id="hpa:HPAG1_0646"/>
<dbReference type="HOGENOM" id="CLU_030894_6_0_7"/>
<dbReference type="GO" id="GO:0005737">
    <property type="term" value="C:cytoplasm"/>
    <property type="evidence" value="ECO:0007669"/>
    <property type="project" value="UniProtKB-SubCell"/>
</dbReference>
<dbReference type="GO" id="GO:0000287">
    <property type="term" value="F:magnesium ion binding"/>
    <property type="evidence" value="ECO:0007669"/>
    <property type="project" value="UniProtKB-UniRule"/>
</dbReference>
<dbReference type="GO" id="GO:0003676">
    <property type="term" value="F:nucleic acid binding"/>
    <property type="evidence" value="ECO:0007669"/>
    <property type="project" value="InterPro"/>
</dbReference>
<dbReference type="GO" id="GO:0004523">
    <property type="term" value="F:RNA-DNA hybrid ribonuclease activity"/>
    <property type="evidence" value="ECO:0007669"/>
    <property type="project" value="UniProtKB-UniRule"/>
</dbReference>
<dbReference type="GO" id="GO:0043137">
    <property type="term" value="P:DNA replication, removal of RNA primer"/>
    <property type="evidence" value="ECO:0007669"/>
    <property type="project" value="TreeGrafter"/>
</dbReference>
<dbReference type="CDD" id="cd09278">
    <property type="entry name" value="RNase_HI_prokaryote_like"/>
    <property type="match status" value="1"/>
</dbReference>
<dbReference type="FunFam" id="3.30.420.10:FF:000089">
    <property type="entry name" value="Ribonuclease H"/>
    <property type="match status" value="1"/>
</dbReference>
<dbReference type="Gene3D" id="3.30.420.10">
    <property type="entry name" value="Ribonuclease H-like superfamily/Ribonuclease H"/>
    <property type="match status" value="1"/>
</dbReference>
<dbReference type="HAMAP" id="MF_00042">
    <property type="entry name" value="RNase_H"/>
    <property type="match status" value="1"/>
</dbReference>
<dbReference type="InterPro" id="IPR050092">
    <property type="entry name" value="RNase_H"/>
</dbReference>
<dbReference type="InterPro" id="IPR012337">
    <property type="entry name" value="RNaseH-like_sf"/>
</dbReference>
<dbReference type="InterPro" id="IPR002156">
    <property type="entry name" value="RNaseH_domain"/>
</dbReference>
<dbReference type="InterPro" id="IPR036397">
    <property type="entry name" value="RNaseH_sf"/>
</dbReference>
<dbReference type="InterPro" id="IPR022892">
    <property type="entry name" value="RNaseHI"/>
</dbReference>
<dbReference type="NCBIfam" id="NF001236">
    <property type="entry name" value="PRK00203.1"/>
    <property type="match status" value="1"/>
</dbReference>
<dbReference type="PANTHER" id="PTHR10642">
    <property type="entry name" value="RIBONUCLEASE H1"/>
    <property type="match status" value="1"/>
</dbReference>
<dbReference type="PANTHER" id="PTHR10642:SF26">
    <property type="entry name" value="RIBONUCLEASE H1"/>
    <property type="match status" value="1"/>
</dbReference>
<dbReference type="Pfam" id="PF00075">
    <property type="entry name" value="RNase_H"/>
    <property type="match status" value="1"/>
</dbReference>
<dbReference type="SUPFAM" id="SSF53098">
    <property type="entry name" value="Ribonuclease H-like"/>
    <property type="match status" value="1"/>
</dbReference>
<dbReference type="PROSITE" id="PS50879">
    <property type="entry name" value="RNASE_H_1"/>
    <property type="match status" value="1"/>
</dbReference>
<comment type="function">
    <text evidence="1">Endonuclease that specifically degrades the RNA of RNA-DNA hybrids.</text>
</comment>
<comment type="catalytic activity">
    <reaction evidence="1">
        <text>Endonucleolytic cleavage to 5'-phosphomonoester.</text>
        <dbReference type="EC" id="3.1.26.4"/>
    </reaction>
</comment>
<comment type="cofactor">
    <cofactor evidence="1">
        <name>Mg(2+)</name>
        <dbReference type="ChEBI" id="CHEBI:18420"/>
    </cofactor>
    <text evidence="1">Binds 1 Mg(2+) ion per subunit. May bind a second metal ion at a regulatory site, or after substrate binding.</text>
</comment>
<comment type="subunit">
    <text evidence="1">Monomer.</text>
</comment>
<comment type="subcellular location">
    <subcellularLocation>
        <location evidence="1">Cytoplasm</location>
    </subcellularLocation>
</comment>
<comment type="similarity">
    <text evidence="1">Belongs to the RNase H family.</text>
</comment>
<feature type="chain" id="PRO_0000332613" description="Ribonuclease H">
    <location>
        <begin position="1"/>
        <end position="143"/>
    </location>
</feature>
<feature type="domain" description="RNase H type-1" evidence="2">
    <location>
        <begin position="1"/>
        <end position="136"/>
    </location>
</feature>
<feature type="binding site" evidence="1">
    <location>
        <position position="9"/>
    </location>
    <ligand>
        <name>Mg(2+)</name>
        <dbReference type="ChEBI" id="CHEBI:18420"/>
        <label>1</label>
    </ligand>
</feature>
<feature type="binding site" evidence="1">
    <location>
        <position position="9"/>
    </location>
    <ligand>
        <name>Mg(2+)</name>
        <dbReference type="ChEBI" id="CHEBI:18420"/>
        <label>2</label>
    </ligand>
</feature>
<feature type="binding site" evidence="1">
    <location>
        <position position="47"/>
    </location>
    <ligand>
        <name>Mg(2+)</name>
        <dbReference type="ChEBI" id="CHEBI:18420"/>
        <label>1</label>
    </ligand>
</feature>
<feature type="binding site" evidence="1">
    <location>
        <position position="69"/>
    </location>
    <ligand>
        <name>Mg(2+)</name>
        <dbReference type="ChEBI" id="CHEBI:18420"/>
        <label>1</label>
    </ligand>
</feature>
<feature type="binding site" evidence="1">
    <location>
        <position position="128"/>
    </location>
    <ligand>
        <name>Mg(2+)</name>
        <dbReference type="ChEBI" id="CHEBI:18420"/>
        <label>2</label>
    </ligand>
</feature>
<sequence>MQEIEIFCDGSSLGNPGPGGYAAILRYKDKEKTISGGEEFTTNNRMELRALNEALKILKRPCRITLYSDSQYVCQAINVWLVNWQKKNFSKVKNVDLWKEFLKVSKGHLIMAVWIKGHNGHAENERCDSLAKLEAQKRTKTIT</sequence>